<sequence>MKLKPIEVAEILQKEIANINCLSELEEVGQVITVGDGIAQIYGLANVKSGEVVEFKSGVKGLVLNLENDSVGAVIMGDDNQVQQGDNVKRTKAVLEVPVGKALLGRVVDALGNPIDGKGDIASKEYRHIEMKAPGIIERTSVSEPVQTGIKAIDSLIPIGRGQRELIIGDRQTGKTAIAVDTIINQKQAHSLTNESDKIYCIYVAIGQKRSSVAQIVKKLEDAGAMDYTLIVSATASEAAALQFIAPYSACSMGEYFRDNGMHALIIYDDLSKHAVAYRQISLLLRRPPGREAYPGDVFYLHSRLLERAAKMSEEKGSGSLTALPIIETQAGDVSAYIPTNVISITDGQIFLESELFYKGVRPAVNVGISVSRVGSAAQIKAMKQVAGSVKLELAQFRELESFSQFGSDLDPATKAQIDHGKRLVEILKQAQYHPFPVEEQIVSIYVGTKKYLNDVPLQKVKEFEDKMLTEIRLNKKDILESIKNEQRITEETEQKLKAFLENFVKEFVK</sequence>
<accession>Q92G86</accession>
<comment type="function">
    <text evidence="1">Produces ATP from ADP in the presence of a proton gradient across the membrane. The alpha chain is a regulatory subunit.</text>
</comment>
<comment type="catalytic activity">
    <reaction evidence="1">
        <text>ATP + H2O + 4 H(+)(in) = ADP + phosphate + 5 H(+)(out)</text>
        <dbReference type="Rhea" id="RHEA:57720"/>
        <dbReference type="ChEBI" id="CHEBI:15377"/>
        <dbReference type="ChEBI" id="CHEBI:15378"/>
        <dbReference type="ChEBI" id="CHEBI:30616"/>
        <dbReference type="ChEBI" id="CHEBI:43474"/>
        <dbReference type="ChEBI" id="CHEBI:456216"/>
        <dbReference type="EC" id="7.1.2.2"/>
    </reaction>
</comment>
<comment type="subunit">
    <text evidence="1">F-type ATPases have 2 components, CF(1) - the catalytic core - and CF(0) - the membrane proton channel. CF(1) has five subunits: alpha(3), beta(3), gamma(1), delta(1), epsilon(1). CF(0) has three main subunits: a(1), b(2) and c(9-12). The alpha and beta chains form an alternating ring which encloses part of the gamma chain. CF(1) is attached to CF(0) by a central stalk formed by the gamma and epsilon chains, while a peripheral stalk is formed by the delta and b chains.</text>
</comment>
<comment type="subcellular location">
    <subcellularLocation>
        <location evidence="1">Cell inner membrane</location>
        <topology evidence="1">Peripheral membrane protein</topology>
    </subcellularLocation>
</comment>
<comment type="similarity">
    <text evidence="1">Belongs to the ATPase alpha/beta chains family.</text>
</comment>
<comment type="sequence caution" evidence="2">
    <conflict type="erroneous initiation">
        <sequence resource="EMBL-CDS" id="AAL03775"/>
    </conflict>
</comment>
<evidence type="ECO:0000255" key="1">
    <source>
        <dbReference type="HAMAP-Rule" id="MF_01346"/>
    </source>
</evidence>
<evidence type="ECO:0000305" key="2"/>
<feature type="chain" id="PRO_0000144347" description="ATP synthase subunit alpha">
    <location>
        <begin position="1"/>
        <end position="510"/>
    </location>
</feature>
<feature type="binding site" evidence="1">
    <location>
        <begin position="169"/>
        <end position="176"/>
    </location>
    <ligand>
        <name>ATP</name>
        <dbReference type="ChEBI" id="CHEBI:30616"/>
    </ligand>
</feature>
<feature type="site" description="Required for activity" evidence="1">
    <location>
        <position position="370"/>
    </location>
</feature>
<reference key="1">
    <citation type="journal article" date="2001" name="Science">
        <title>Mechanisms of evolution in Rickettsia conorii and R. prowazekii.</title>
        <authorList>
            <person name="Ogata H."/>
            <person name="Audic S."/>
            <person name="Renesto-Audiffren P."/>
            <person name="Fournier P.-E."/>
            <person name="Barbe V."/>
            <person name="Samson D."/>
            <person name="Roux V."/>
            <person name="Cossart P."/>
            <person name="Weissenbach J."/>
            <person name="Claverie J.-M."/>
            <person name="Raoult D."/>
        </authorList>
    </citation>
    <scope>NUCLEOTIDE SEQUENCE [LARGE SCALE GENOMIC DNA]</scope>
    <source>
        <strain>ATCC VR-613 / Malish 7</strain>
    </source>
</reference>
<proteinExistence type="inferred from homology"/>
<name>ATPA_RICCN</name>
<protein>
    <recommendedName>
        <fullName evidence="1">ATP synthase subunit alpha</fullName>
        <ecNumber evidence="1">7.1.2.2</ecNumber>
    </recommendedName>
    <alternativeName>
        <fullName evidence="1">ATP synthase F1 sector subunit alpha</fullName>
    </alternativeName>
    <alternativeName>
        <fullName evidence="1">F-ATPase subunit alpha</fullName>
    </alternativeName>
</protein>
<keyword id="KW-0066">ATP synthesis</keyword>
<keyword id="KW-0067">ATP-binding</keyword>
<keyword id="KW-0997">Cell inner membrane</keyword>
<keyword id="KW-1003">Cell membrane</keyword>
<keyword id="KW-0139">CF(1)</keyword>
<keyword id="KW-0375">Hydrogen ion transport</keyword>
<keyword id="KW-0406">Ion transport</keyword>
<keyword id="KW-0472">Membrane</keyword>
<keyword id="KW-0547">Nucleotide-binding</keyword>
<keyword id="KW-1278">Translocase</keyword>
<keyword id="KW-0813">Transport</keyword>
<organism>
    <name type="scientific">Rickettsia conorii (strain ATCC VR-613 / Malish 7)</name>
    <dbReference type="NCBI Taxonomy" id="272944"/>
    <lineage>
        <taxon>Bacteria</taxon>
        <taxon>Pseudomonadati</taxon>
        <taxon>Pseudomonadota</taxon>
        <taxon>Alphaproteobacteria</taxon>
        <taxon>Rickettsiales</taxon>
        <taxon>Rickettsiaceae</taxon>
        <taxon>Rickettsieae</taxon>
        <taxon>Rickettsia</taxon>
        <taxon>spotted fever group</taxon>
    </lineage>
</organism>
<dbReference type="EC" id="7.1.2.2" evidence="1"/>
<dbReference type="EMBL" id="AE006914">
    <property type="protein sequence ID" value="AAL03775.1"/>
    <property type="status" value="ALT_INIT"/>
    <property type="molecule type" value="Genomic_DNA"/>
</dbReference>
<dbReference type="PIR" id="E97854">
    <property type="entry name" value="E97854"/>
</dbReference>
<dbReference type="RefSeq" id="WP_010977802.1">
    <property type="nucleotide sequence ID" value="NC_003103.1"/>
</dbReference>
<dbReference type="SMR" id="Q92G86"/>
<dbReference type="GeneID" id="928391"/>
<dbReference type="KEGG" id="rco:RC1237"/>
<dbReference type="PATRIC" id="fig|272944.4.peg.1418"/>
<dbReference type="HOGENOM" id="CLU_010091_2_1_5"/>
<dbReference type="Proteomes" id="UP000000816">
    <property type="component" value="Chromosome"/>
</dbReference>
<dbReference type="GO" id="GO:0005886">
    <property type="term" value="C:plasma membrane"/>
    <property type="evidence" value="ECO:0007669"/>
    <property type="project" value="UniProtKB-SubCell"/>
</dbReference>
<dbReference type="GO" id="GO:0045259">
    <property type="term" value="C:proton-transporting ATP synthase complex"/>
    <property type="evidence" value="ECO:0007669"/>
    <property type="project" value="UniProtKB-KW"/>
</dbReference>
<dbReference type="GO" id="GO:0043531">
    <property type="term" value="F:ADP binding"/>
    <property type="evidence" value="ECO:0007669"/>
    <property type="project" value="TreeGrafter"/>
</dbReference>
<dbReference type="GO" id="GO:0005524">
    <property type="term" value="F:ATP binding"/>
    <property type="evidence" value="ECO:0007669"/>
    <property type="project" value="UniProtKB-UniRule"/>
</dbReference>
<dbReference type="GO" id="GO:0046933">
    <property type="term" value="F:proton-transporting ATP synthase activity, rotational mechanism"/>
    <property type="evidence" value="ECO:0007669"/>
    <property type="project" value="UniProtKB-UniRule"/>
</dbReference>
<dbReference type="CDD" id="cd18113">
    <property type="entry name" value="ATP-synt_F1_alpha_C"/>
    <property type="match status" value="1"/>
</dbReference>
<dbReference type="CDD" id="cd18116">
    <property type="entry name" value="ATP-synt_F1_alpha_N"/>
    <property type="match status" value="1"/>
</dbReference>
<dbReference type="CDD" id="cd01132">
    <property type="entry name" value="F1-ATPase_alpha_CD"/>
    <property type="match status" value="1"/>
</dbReference>
<dbReference type="FunFam" id="1.20.150.20:FF:000001">
    <property type="entry name" value="ATP synthase subunit alpha"/>
    <property type="match status" value="1"/>
</dbReference>
<dbReference type="FunFam" id="2.40.30.20:FF:000001">
    <property type="entry name" value="ATP synthase subunit alpha"/>
    <property type="match status" value="1"/>
</dbReference>
<dbReference type="FunFam" id="3.40.50.300:FF:002432">
    <property type="entry name" value="ATP synthase subunit alpha, mitochondrial"/>
    <property type="match status" value="1"/>
</dbReference>
<dbReference type="Gene3D" id="2.40.30.20">
    <property type="match status" value="1"/>
</dbReference>
<dbReference type="Gene3D" id="1.20.150.20">
    <property type="entry name" value="ATP synthase alpha/beta chain, C-terminal domain"/>
    <property type="match status" value="1"/>
</dbReference>
<dbReference type="Gene3D" id="3.40.50.300">
    <property type="entry name" value="P-loop containing nucleotide triphosphate hydrolases"/>
    <property type="match status" value="1"/>
</dbReference>
<dbReference type="HAMAP" id="MF_01346">
    <property type="entry name" value="ATP_synth_alpha_bact"/>
    <property type="match status" value="1"/>
</dbReference>
<dbReference type="InterPro" id="IPR023366">
    <property type="entry name" value="ATP_synth_asu-like_sf"/>
</dbReference>
<dbReference type="InterPro" id="IPR000793">
    <property type="entry name" value="ATP_synth_asu_C"/>
</dbReference>
<dbReference type="InterPro" id="IPR038376">
    <property type="entry name" value="ATP_synth_asu_C_sf"/>
</dbReference>
<dbReference type="InterPro" id="IPR033732">
    <property type="entry name" value="ATP_synth_F1_a_nt-bd_dom"/>
</dbReference>
<dbReference type="InterPro" id="IPR005294">
    <property type="entry name" value="ATP_synth_F1_asu"/>
</dbReference>
<dbReference type="InterPro" id="IPR020003">
    <property type="entry name" value="ATPase_a/bsu_AS"/>
</dbReference>
<dbReference type="InterPro" id="IPR004100">
    <property type="entry name" value="ATPase_F1/V1/A1_a/bsu_N"/>
</dbReference>
<dbReference type="InterPro" id="IPR036121">
    <property type="entry name" value="ATPase_F1/V1/A1_a/bsu_N_sf"/>
</dbReference>
<dbReference type="InterPro" id="IPR000194">
    <property type="entry name" value="ATPase_F1/V1/A1_a/bsu_nucl-bd"/>
</dbReference>
<dbReference type="InterPro" id="IPR027417">
    <property type="entry name" value="P-loop_NTPase"/>
</dbReference>
<dbReference type="NCBIfam" id="TIGR00962">
    <property type="entry name" value="atpA"/>
    <property type="match status" value="1"/>
</dbReference>
<dbReference type="NCBIfam" id="NF009884">
    <property type="entry name" value="PRK13343.1"/>
    <property type="match status" value="1"/>
</dbReference>
<dbReference type="PANTHER" id="PTHR48082">
    <property type="entry name" value="ATP SYNTHASE SUBUNIT ALPHA, MITOCHONDRIAL"/>
    <property type="match status" value="1"/>
</dbReference>
<dbReference type="PANTHER" id="PTHR48082:SF2">
    <property type="entry name" value="ATP SYNTHASE SUBUNIT ALPHA, MITOCHONDRIAL"/>
    <property type="match status" value="1"/>
</dbReference>
<dbReference type="Pfam" id="PF00006">
    <property type="entry name" value="ATP-synt_ab"/>
    <property type="match status" value="1"/>
</dbReference>
<dbReference type="Pfam" id="PF00306">
    <property type="entry name" value="ATP-synt_ab_C"/>
    <property type="match status" value="1"/>
</dbReference>
<dbReference type="Pfam" id="PF02874">
    <property type="entry name" value="ATP-synt_ab_N"/>
    <property type="match status" value="1"/>
</dbReference>
<dbReference type="PIRSF" id="PIRSF039088">
    <property type="entry name" value="F_ATPase_subunit_alpha"/>
    <property type="match status" value="1"/>
</dbReference>
<dbReference type="SUPFAM" id="SSF47917">
    <property type="entry name" value="C-terminal domain of alpha and beta subunits of F1 ATP synthase"/>
    <property type="match status" value="1"/>
</dbReference>
<dbReference type="SUPFAM" id="SSF50615">
    <property type="entry name" value="N-terminal domain of alpha and beta subunits of F1 ATP synthase"/>
    <property type="match status" value="1"/>
</dbReference>
<dbReference type="SUPFAM" id="SSF52540">
    <property type="entry name" value="P-loop containing nucleoside triphosphate hydrolases"/>
    <property type="match status" value="1"/>
</dbReference>
<dbReference type="PROSITE" id="PS00152">
    <property type="entry name" value="ATPASE_ALPHA_BETA"/>
    <property type="match status" value="1"/>
</dbReference>
<gene>
    <name evidence="1" type="primary">atpA</name>
    <name type="ordered locus">RC1237</name>
</gene>